<accession>Q60298</accession>
<gene>
    <name type="ordered locus">MJECL43</name>
</gene>
<protein>
    <recommendedName>
        <fullName>Uncharacterized protein MJECL43</fullName>
    </recommendedName>
</protein>
<organism>
    <name type="scientific">Methanocaldococcus jannaschii (strain ATCC 43067 / DSM 2661 / JAL-1 / JCM 10045 / NBRC 100440)</name>
    <name type="common">Methanococcus jannaschii</name>
    <dbReference type="NCBI Taxonomy" id="243232"/>
    <lineage>
        <taxon>Archaea</taxon>
        <taxon>Methanobacteriati</taxon>
        <taxon>Methanobacteriota</taxon>
        <taxon>Methanomada group</taxon>
        <taxon>Methanococci</taxon>
        <taxon>Methanococcales</taxon>
        <taxon>Methanocaldococcaceae</taxon>
        <taxon>Methanocaldococcus</taxon>
    </lineage>
</organism>
<reference key="1">
    <citation type="journal article" date="1996" name="Science">
        <title>Complete genome sequence of the methanogenic archaeon, Methanococcus jannaschii.</title>
        <authorList>
            <person name="Bult C.J."/>
            <person name="White O."/>
            <person name="Olsen G.J."/>
            <person name="Zhou L."/>
            <person name="Fleischmann R.D."/>
            <person name="Sutton G.G."/>
            <person name="Blake J.A."/>
            <person name="FitzGerald L.M."/>
            <person name="Clayton R.A."/>
            <person name="Gocayne J.D."/>
            <person name="Kerlavage A.R."/>
            <person name="Dougherty B.A."/>
            <person name="Tomb J.-F."/>
            <person name="Adams M.D."/>
            <person name="Reich C.I."/>
            <person name="Overbeek R."/>
            <person name="Kirkness E.F."/>
            <person name="Weinstock K.G."/>
            <person name="Merrick J.M."/>
            <person name="Glodek A."/>
            <person name="Scott J.L."/>
            <person name="Geoghagen N.S.M."/>
            <person name="Weidman J.F."/>
            <person name="Fuhrmann J.L."/>
            <person name="Nguyen D."/>
            <person name="Utterback T.R."/>
            <person name="Kelley J.M."/>
            <person name="Peterson J.D."/>
            <person name="Sadow P.W."/>
            <person name="Hanna M.C."/>
            <person name="Cotton M.D."/>
            <person name="Roberts K.M."/>
            <person name="Hurst M.A."/>
            <person name="Kaine B.P."/>
            <person name="Borodovsky M."/>
            <person name="Klenk H.-P."/>
            <person name="Fraser C.M."/>
            <person name="Smith H.O."/>
            <person name="Woese C.R."/>
            <person name="Venter J.C."/>
        </authorList>
    </citation>
    <scope>NUCLEOTIDE SEQUENCE [LARGE SCALE GENOMIC DNA]</scope>
    <source>
        <strain>ATCC 43067 / DSM 2661 / JAL-1 / JCM 10045 / NBRC 100440</strain>
    </source>
</reference>
<feature type="chain" id="PRO_0000107522" description="Uncharacterized protein MJECL43">
    <location>
        <begin position="1"/>
        <end position="384"/>
    </location>
</feature>
<dbReference type="EMBL" id="L77118">
    <property type="protein sequence ID" value="AAC37112.1"/>
    <property type="molecule type" value="Genomic_DNA"/>
</dbReference>
<dbReference type="PIR" id="B64515">
    <property type="entry name" value="B64515"/>
</dbReference>
<dbReference type="RefSeq" id="WP_010890091.1">
    <property type="nucleotide sequence ID" value="NC_001732.1"/>
</dbReference>
<dbReference type="FunCoup" id="Q60298">
    <property type="interactions" value="1"/>
</dbReference>
<dbReference type="PaxDb" id="243232-MJ_ECL43"/>
<dbReference type="EnsemblBacteria" id="AAC37112">
    <property type="protein sequence ID" value="AAC37112"/>
    <property type="gene ID" value="MJ_ECL43"/>
</dbReference>
<dbReference type="GeneID" id="1450825"/>
<dbReference type="KEGG" id="mja:MJ_ECL43"/>
<dbReference type="eggNOG" id="arCOG03235">
    <property type="taxonomic scope" value="Archaea"/>
</dbReference>
<dbReference type="HOGENOM" id="CLU_718892_0_0_2"/>
<dbReference type="InParanoid" id="Q60298"/>
<dbReference type="OrthoDB" id="255259at2157"/>
<dbReference type="PhylomeDB" id="Q60298"/>
<dbReference type="Proteomes" id="UP000000805">
    <property type="component" value="Plasmid pDSM2661_1"/>
</dbReference>
<dbReference type="Gene3D" id="3.40.50.300">
    <property type="entry name" value="P-loop containing nucleotide triphosphate hydrolases"/>
    <property type="match status" value="1"/>
</dbReference>
<dbReference type="InterPro" id="IPR051396">
    <property type="entry name" value="Bact_Antivir_Def_Nuclease"/>
</dbReference>
<dbReference type="InterPro" id="IPR027417">
    <property type="entry name" value="P-loop_NTPase"/>
</dbReference>
<dbReference type="PANTHER" id="PTHR43581">
    <property type="entry name" value="ATP/GTP PHOSPHATASE"/>
    <property type="match status" value="1"/>
</dbReference>
<dbReference type="PANTHER" id="PTHR43581:SF4">
    <property type="entry name" value="ATP_GTP PHOSPHATASE"/>
    <property type="match status" value="1"/>
</dbReference>
<dbReference type="SUPFAM" id="SSF52540">
    <property type="entry name" value="P-loop containing nucleoside triphosphate hydrolases"/>
    <property type="match status" value="1"/>
</dbReference>
<geneLocation type="plasmid">
    <name>large ECE</name>
</geneLocation>
<proteinExistence type="predicted"/>
<name>Y3543_METJA</name>
<sequence>MNIDIEDFEKKPLYIQRIILRNSCIEFSKMLKKYWDKNIMIGIQISEREMSFEIEERDNKNEPIKITLPEYRSKGFKWYLAYLITLEYLRILKNGGNNDIVLLLDDPAVYLHPNVQKSFLEKLEELSKEYQILYNTHLMSLFNEEELDRVLLVYLDKENRTKIKRPWSNEQKDIIYPIRRALGVDKILFKENLSKILFVEGISDKFILEGLGKLETLKNLKNWYIHPLSGGDKLEDNEIVKKVRLYSCLSNFEEIKYYFLLDGDKKEKFERDKISNKIIFLGDENQEIEDLIDKNFYLDCVLETYKRIFTHDLEKFKKVKEIVEKLRKSKSKIIEELNNEFRLNNLGDFSKVDVAITIKRKLYENPELANKFEKIIDCLNGKII</sequence>
<keyword id="KW-0614">Plasmid</keyword>
<keyword id="KW-1185">Reference proteome</keyword>